<accession>Q56057</accession>
<sequence length="301" mass="33882">MSTDKTYCGFIAIVGRPNVGKSTLLNKLLGQKISITSRKAQTTRHRIVGIHTEGPYQAIYVDTPGLHMEEKRAINRLMNKAASSSIGDVELVIFVVEGTRWTPDDEMVLNKLRDGKAPVILAVNKVDNVQEKVDLLPHLQFLASQMNFLDIVPISAETGMNVDTIAGIVRKHLPEAIHHFPEDYITDRSQRFMASEIIREKLMRFLGAELPYSVTVEIERFVTNERGGYDINGLILVEREGQKKMVIGNKGAKIKTIGIEARKDMQEMFEAPVHLELWVKVKSGWADDERALRSLGYVDDL</sequence>
<name>ERA_SALTY</name>
<keyword id="KW-0997">Cell inner membrane</keyword>
<keyword id="KW-1003">Cell membrane</keyword>
<keyword id="KW-0963">Cytoplasm</keyword>
<keyword id="KW-0342">GTP-binding</keyword>
<keyword id="KW-0472">Membrane</keyword>
<keyword id="KW-0547">Nucleotide-binding</keyword>
<keyword id="KW-1185">Reference proteome</keyword>
<keyword id="KW-0690">Ribosome biogenesis</keyword>
<keyword id="KW-0694">RNA-binding</keyword>
<keyword id="KW-0699">rRNA-binding</keyword>
<proteinExistence type="inferred from homology"/>
<dbReference type="EMBL" id="U48415">
    <property type="protein sequence ID" value="AAA92441.1"/>
    <property type="molecule type" value="Genomic_DNA"/>
</dbReference>
<dbReference type="EMBL" id="AE006468">
    <property type="protein sequence ID" value="AAL21474.1"/>
    <property type="molecule type" value="Genomic_DNA"/>
</dbReference>
<dbReference type="RefSeq" id="NP_461515.1">
    <property type="nucleotide sequence ID" value="NC_003197.2"/>
</dbReference>
<dbReference type="RefSeq" id="WP_000102232.1">
    <property type="nucleotide sequence ID" value="NC_003197.2"/>
</dbReference>
<dbReference type="SMR" id="Q56057"/>
<dbReference type="STRING" id="99287.STM2580"/>
<dbReference type="PaxDb" id="99287-STM2580"/>
<dbReference type="GeneID" id="1254102"/>
<dbReference type="KEGG" id="stm:STM2580"/>
<dbReference type="PATRIC" id="fig|99287.12.peg.2721"/>
<dbReference type="HOGENOM" id="CLU_038009_1_2_6"/>
<dbReference type="OMA" id="WAEVDVI"/>
<dbReference type="PhylomeDB" id="Q56057"/>
<dbReference type="BioCyc" id="SENT99287:STM2580-MONOMER"/>
<dbReference type="Proteomes" id="UP000001014">
    <property type="component" value="Chromosome"/>
</dbReference>
<dbReference type="GO" id="GO:0005829">
    <property type="term" value="C:cytosol"/>
    <property type="evidence" value="ECO:0000318"/>
    <property type="project" value="GO_Central"/>
</dbReference>
<dbReference type="GO" id="GO:0005886">
    <property type="term" value="C:plasma membrane"/>
    <property type="evidence" value="ECO:0007669"/>
    <property type="project" value="UniProtKB-SubCell"/>
</dbReference>
<dbReference type="GO" id="GO:0005525">
    <property type="term" value="F:GTP binding"/>
    <property type="evidence" value="ECO:0007669"/>
    <property type="project" value="UniProtKB-UniRule"/>
</dbReference>
<dbReference type="GO" id="GO:0003924">
    <property type="term" value="F:GTPase activity"/>
    <property type="evidence" value="ECO:0007669"/>
    <property type="project" value="UniProtKB-UniRule"/>
</dbReference>
<dbReference type="GO" id="GO:0043024">
    <property type="term" value="F:ribosomal small subunit binding"/>
    <property type="evidence" value="ECO:0000318"/>
    <property type="project" value="GO_Central"/>
</dbReference>
<dbReference type="GO" id="GO:0019843">
    <property type="term" value="F:rRNA binding"/>
    <property type="evidence" value="ECO:0000318"/>
    <property type="project" value="GO_Central"/>
</dbReference>
<dbReference type="GO" id="GO:0070181">
    <property type="term" value="F:small ribosomal subunit rRNA binding"/>
    <property type="evidence" value="ECO:0007669"/>
    <property type="project" value="UniProtKB-UniRule"/>
</dbReference>
<dbReference type="GO" id="GO:0000028">
    <property type="term" value="P:ribosomal small subunit assembly"/>
    <property type="evidence" value="ECO:0000318"/>
    <property type="project" value="GO_Central"/>
</dbReference>
<dbReference type="CDD" id="cd04163">
    <property type="entry name" value="Era"/>
    <property type="match status" value="1"/>
</dbReference>
<dbReference type="CDD" id="cd22534">
    <property type="entry name" value="KH-II_Era"/>
    <property type="match status" value="1"/>
</dbReference>
<dbReference type="FunFam" id="3.30.300.20:FF:000003">
    <property type="entry name" value="GTPase Era"/>
    <property type="match status" value="1"/>
</dbReference>
<dbReference type="FunFam" id="3.40.50.300:FF:000094">
    <property type="entry name" value="GTPase Era"/>
    <property type="match status" value="1"/>
</dbReference>
<dbReference type="Gene3D" id="3.30.300.20">
    <property type="match status" value="1"/>
</dbReference>
<dbReference type="Gene3D" id="3.40.50.300">
    <property type="entry name" value="P-loop containing nucleotide triphosphate hydrolases"/>
    <property type="match status" value="1"/>
</dbReference>
<dbReference type="HAMAP" id="MF_00367">
    <property type="entry name" value="GTPase_Era"/>
    <property type="match status" value="1"/>
</dbReference>
<dbReference type="InterPro" id="IPR030388">
    <property type="entry name" value="G_ERA_dom"/>
</dbReference>
<dbReference type="InterPro" id="IPR006073">
    <property type="entry name" value="GTP-bd"/>
</dbReference>
<dbReference type="InterPro" id="IPR005662">
    <property type="entry name" value="GTPase_Era-like"/>
</dbReference>
<dbReference type="InterPro" id="IPR015946">
    <property type="entry name" value="KH_dom-like_a/b"/>
</dbReference>
<dbReference type="InterPro" id="IPR004044">
    <property type="entry name" value="KH_dom_type_2"/>
</dbReference>
<dbReference type="InterPro" id="IPR009019">
    <property type="entry name" value="KH_sf_prok-type"/>
</dbReference>
<dbReference type="InterPro" id="IPR027417">
    <property type="entry name" value="P-loop_NTPase"/>
</dbReference>
<dbReference type="InterPro" id="IPR005225">
    <property type="entry name" value="Small_GTP-bd"/>
</dbReference>
<dbReference type="NCBIfam" id="TIGR00436">
    <property type="entry name" value="era"/>
    <property type="match status" value="1"/>
</dbReference>
<dbReference type="NCBIfam" id="NF000908">
    <property type="entry name" value="PRK00089.1"/>
    <property type="match status" value="1"/>
</dbReference>
<dbReference type="NCBIfam" id="TIGR00231">
    <property type="entry name" value="small_GTP"/>
    <property type="match status" value="1"/>
</dbReference>
<dbReference type="PANTHER" id="PTHR42698">
    <property type="entry name" value="GTPASE ERA"/>
    <property type="match status" value="1"/>
</dbReference>
<dbReference type="PANTHER" id="PTHR42698:SF1">
    <property type="entry name" value="GTPASE ERA, MITOCHONDRIAL"/>
    <property type="match status" value="1"/>
</dbReference>
<dbReference type="Pfam" id="PF07650">
    <property type="entry name" value="KH_2"/>
    <property type="match status" value="1"/>
</dbReference>
<dbReference type="Pfam" id="PF01926">
    <property type="entry name" value="MMR_HSR1"/>
    <property type="match status" value="1"/>
</dbReference>
<dbReference type="SUPFAM" id="SSF52540">
    <property type="entry name" value="P-loop containing nucleoside triphosphate hydrolases"/>
    <property type="match status" value="1"/>
</dbReference>
<dbReference type="SUPFAM" id="SSF54814">
    <property type="entry name" value="Prokaryotic type KH domain (KH-domain type II)"/>
    <property type="match status" value="1"/>
</dbReference>
<dbReference type="PROSITE" id="PS51713">
    <property type="entry name" value="G_ERA"/>
    <property type="match status" value="1"/>
</dbReference>
<dbReference type="PROSITE" id="PS50823">
    <property type="entry name" value="KH_TYPE_2"/>
    <property type="match status" value="1"/>
</dbReference>
<feature type="chain" id="PRO_0000180045" description="GTPase Era">
    <location>
        <begin position="1"/>
        <end position="301"/>
    </location>
</feature>
<feature type="domain" description="Era-type G" evidence="2">
    <location>
        <begin position="7"/>
        <end position="175"/>
    </location>
</feature>
<feature type="domain" description="KH type-2" evidence="1">
    <location>
        <begin position="206"/>
        <end position="283"/>
    </location>
</feature>
<feature type="region of interest" description="G1" evidence="2">
    <location>
        <begin position="15"/>
        <end position="22"/>
    </location>
</feature>
<feature type="region of interest" description="G2" evidence="2">
    <location>
        <begin position="41"/>
        <end position="45"/>
    </location>
</feature>
<feature type="region of interest" description="G3" evidence="2">
    <location>
        <begin position="62"/>
        <end position="65"/>
    </location>
</feature>
<feature type="region of interest" description="G4" evidence="2">
    <location>
        <begin position="124"/>
        <end position="127"/>
    </location>
</feature>
<feature type="region of interest" description="G5" evidence="2">
    <location>
        <begin position="154"/>
        <end position="156"/>
    </location>
</feature>
<feature type="binding site" evidence="1">
    <location>
        <begin position="15"/>
        <end position="22"/>
    </location>
    <ligand>
        <name>GTP</name>
        <dbReference type="ChEBI" id="CHEBI:37565"/>
    </ligand>
</feature>
<feature type="binding site" evidence="1">
    <location>
        <begin position="62"/>
        <end position="66"/>
    </location>
    <ligand>
        <name>GTP</name>
        <dbReference type="ChEBI" id="CHEBI:37565"/>
    </ligand>
</feature>
<feature type="binding site" evidence="1">
    <location>
        <begin position="124"/>
        <end position="127"/>
    </location>
    <ligand>
        <name>GTP</name>
        <dbReference type="ChEBI" id="CHEBI:37565"/>
    </ligand>
</feature>
<feature type="sequence conflict" description="In Ref. 1; AAA92441." evidence="3" ref="1">
    <original>Q</original>
    <variation>R</variation>
    <location>
        <position position="31"/>
    </location>
</feature>
<feature type="sequence conflict" description="In Ref. 1; AAA92441." evidence="3" ref="1">
    <original>RIVGI</original>
    <variation>ALSVC</variation>
    <location>
        <begin position="46"/>
        <end position="50"/>
    </location>
</feature>
<feature type="sequence conflict" description="In Ref. 1; AAA92441." evidence="3" ref="1">
    <original>G</original>
    <variation>D</variation>
    <location>
        <position position="54"/>
    </location>
</feature>
<feature type="sequence conflict" description="In Ref. 1; AAA92441." evidence="3" ref="1">
    <original>R</original>
    <variation>RL</variation>
    <location>
        <position position="72"/>
    </location>
</feature>
<feature type="sequence conflict" description="In Ref. 1; AAA92441." evidence="3" ref="1">
    <location>
        <position position="96"/>
    </location>
</feature>
<feature type="sequence conflict" description="In Ref. 1; AAA92441." evidence="3" ref="1">
    <original>L</original>
    <variation>P</variation>
    <location>
        <position position="149"/>
    </location>
</feature>
<feature type="sequence conflict" description="In Ref. 1; AAA92441." evidence="3" ref="1">
    <original>G</original>
    <variation>R</variation>
    <location>
        <position position="207"/>
    </location>
</feature>
<feature type="sequence conflict" description="In Ref. 1; AAA92441." evidence="3" ref="1">
    <original>RA</original>
    <variation>SR</variation>
    <location>
        <begin position="290"/>
        <end position="291"/>
    </location>
</feature>
<gene>
    <name evidence="1" type="primary">era</name>
    <name type="ordered locus">STM2580</name>
</gene>
<comment type="function">
    <text evidence="1">An essential GTPase that binds both GDP and GTP, with rapid nucleotide exchange. Plays a role in 16S rRNA processing and 30S ribosomal subunit biogenesis and possibly also in cell cycle regulation and energy metabolism.</text>
</comment>
<comment type="subunit">
    <text evidence="1">Monomer.</text>
</comment>
<comment type="subcellular location">
    <subcellularLocation>
        <location>Cytoplasm</location>
    </subcellularLocation>
    <subcellularLocation>
        <location evidence="1">Cell inner membrane</location>
        <topology evidence="1">Peripheral membrane protein</topology>
    </subcellularLocation>
</comment>
<comment type="similarity">
    <text evidence="1 2">Belongs to the TRAFAC class TrmE-Era-EngA-EngB-Septin-like GTPase superfamily. Era GTPase family.</text>
</comment>
<protein>
    <recommendedName>
        <fullName evidence="1">GTPase Era</fullName>
    </recommendedName>
</protein>
<reference key="1">
    <citation type="journal article" date="1996" name="Biochimie">
        <title>Structure and regulation of the Salmonella typhimurium rnc-era-recO operon.</title>
        <authorList>
            <person name="Anderson P.E."/>
            <person name="Matsunaga J."/>
            <person name="Simons E.L."/>
            <person name="Simons R.W."/>
        </authorList>
    </citation>
    <scope>NUCLEOTIDE SEQUENCE [GENOMIC DNA]</scope>
    <source>
        <strain>TSM117</strain>
    </source>
</reference>
<reference key="2">
    <citation type="journal article" date="2001" name="Nature">
        <title>Complete genome sequence of Salmonella enterica serovar Typhimurium LT2.</title>
        <authorList>
            <person name="McClelland M."/>
            <person name="Sanderson K.E."/>
            <person name="Spieth J."/>
            <person name="Clifton S.W."/>
            <person name="Latreille P."/>
            <person name="Courtney L."/>
            <person name="Porwollik S."/>
            <person name="Ali J."/>
            <person name="Dante M."/>
            <person name="Du F."/>
            <person name="Hou S."/>
            <person name="Layman D."/>
            <person name="Leonard S."/>
            <person name="Nguyen C."/>
            <person name="Scott K."/>
            <person name="Holmes A."/>
            <person name="Grewal N."/>
            <person name="Mulvaney E."/>
            <person name="Ryan E."/>
            <person name="Sun H."/>
            <person name="Florea L."/>
            <person name="Miller W."/>
            <person name="Stoneking T."/>
            <person name="Nhan M."/>
            <person name="Waterston R."/>
            <person name="Wilson R.K."/>
        </authorList>
    </citation>
    <scope>NUCLEOTIDE SEQUENCE [LARGE SCALE GENOMIC DNA]</scope>
    <source>
        <strain>LT2 / SGSC1412 / ATCC 700720</strain>
    </source>
</reference>
<organism>
    <name type="scientific">Salmonella typhimurium (strain LT2 / SGSC1412 / ATCC 700720)</name>
    <dbReference type="NCBI Taxonomy" id="99287"/>
    <lineage>
        <taxon>Bacteria</taxon>
        <taxon>Pseudomonadati</taxon>
        <taxon>Pseudomonadota</taxon>
        <taxon>Gammaproteobacteria</taxon>
        <taxon>Enterobacterales</taxon>
        <taxon>Enterobacteriaceae</taxon>
        <taxon>Salmonella</taxon>
    </lineage>
</organism>
<evidence type="ECO:0000255" key="1">
    <source>
        <dbReference type="HAMAP-Rule" id="MF_00367"/>
    </source>
</evidence>
<evidence type="ECO:0000255" key="2">
    <source>
        <dbReference type="PROSITE-ProRule" id="PRU01050"/>
    </source>
</evidence>
<evidence type="ECO:0000305" key="3"/>